<protein>
    <recommendedName>
        <fullName evidence="1">3-deoxy-manno-octulosonate cytidylyltransferase</fullName>
        <ecNumber evidence="1">2.7.7.38</ecNumber>
    </recommendedName>
    <alternativeName>
        <fullName evidence="1">CMP-2-keto-3-deoxyoctulosonic acid synthase</fullName>
        <shortName evidence="1">CKS</shortName>
        <shortName evidence="1">CMP-KDO synthase</shortName>
    </alternativeName>
</protein>
<keyword id="KW-0963">Cytoplasm</keyword>
<keyword id="KW-0448">Lipopolysaccharide biosynthesis</keyword>
<keyword id="KW-0548">Nucleotidyltransferase</keyword>
<keyword id="KW-0808">Transferase</keyword>
<organism>
    <name type="scientific">Escherichia coli (strain K12 / DH10B)</name>
    <dbReference type="NCBI Taxonomy" id="316385"/>
    <lineage>
        <taxon>Bacteria</taxon>
        <taxon>Pseudomonadati</taxon>
        <taxon>Pseudomonadota</taxon>
        <taxon>Gammaproteobacteria</taxon>
        <taxon>Enterobacterales</taxon>
        <taxon>Enterobacteriaceae</taxon>
        <taxon>Escherichia</taxon>
    </lineage>
</organism>
<sequence>MSFVVIIPARYASTRLPGKPLVDINGKPMIVHVLERARESGAERIIVATDHEDVARAVEAAGGEVCMTRADHQSGTERLAEVVEKCAFSDDTVIVNVQGDEPMIPATIIRQVADNLAQRQVGMATLAVPIHNAEEAFNPNAVKVVLDAEGYALYFSRATIPWDRDRFAEGLETVGDNFLRHLGIYGYRAGFIRRYVNWQPSPLEHIEMLEQLRVLWYGEKIHVAVAQEVPGTGVDTPEDLERVRAEMR</sequence>
<reference key="1">
    <citation type="journal article" date="2008" name="J. Bacteriol.">
        <title>The complete genome sequence of Escherichia coli DH10B: insights into the biology of a laboratory workhorse.</title>
        <authorList>
            <person name="Durfee T."/>
            <person name="Nelson R."/>
            <person name="Baldwin S."/>
            <person name="Plunkett G. III"/>
            <person name="Burland V."/>
            <person name="Mau B."/>
            <person name="Petrosino J.F."/>
            <person name="Qin X."/>
            <person name="Muzny D.M."/>
            <person name="Ayele M."/>
            <person name="Gibbs R.A."/>
            <person name="Csorgo B."/>
            <person name="Posfai G."/>
            <person name="Weinstock G.M."/>
            <person name="Blattner F.R."/>
        </authorList>
    </citation>
    <scope>NUCLEOTIDE SEQUENCE [LARGE SCALE GENOMIC DNA]</scope>
    <source>
        <strain>K12 / DH10B</strain>
    </source>
</reference>
<dbReference type="EC" id="2.7.7.38" evidence="1"/>
<dbReference type="EMBL" id="CP000948">
    <property type="protein sequence ID" value="ACB02118.1"/>
    <property type="molecule type" value="Genomic_DNA"/>
</dbReference>
<dbReference type="RefSeq" id="WP_000011603.1">
    <property type="nucleotide sequence ID" value="NC_010473.1"/>
</dbReference>
<dbReference type="SMR" id="B1X8M2"/>
<dbReference type="KEGG" id="ecd:ECDH10B_0988"/>
<dbReference type="HOGENOM" id="CLU_065038_1_0_6"/>
<dbReference type="UniPathway" id="UPA00030"/>
<dbReference type="UniPathway" id="UPA00358">
    <property type="reaction ID" value="UER00476"/>
</dbReference>
<dbReference type="GO" id="GO:0005829">
    <property type="term" value="C:cytosol"/>
    <property type="evidence" value="ECO:0007669"/>
    <property type="project" value="TreeGrafter"/>
</dbReference>
<dbReference type="GO" id="GO:0008690">
    <property type="term" value="F:3-deoxy-manno-octulosonate cytidylyltransferase activity"/>
    <property type="evidence" value="ECO:0007669"/>
    <property type="project" value="UniProtKB-UniRule"/>
</dbReference>
<dbReference type="GO" id="GO:0033468">
    <property type="term" value="P:CMP-keto-3-deoxy-D-manno-octulosonic acid biosynthetic process"/>
    <property type="evidence" value="ECO:0007669"/>
    <property type="project" value="UniProtKB-UniRule"/>
</dbReference>
<dbReference type="GO" id="GO:0009103">
    <property type="term" value="P:lipopolysaccharide biosynthetic process"/>
    <property type="evidence" value="ECO:0007669"/>
    <property type="project" value="UniProtKB-UniRule"/>
</dbReference>
<dbReference type="CDD" id="cd02517">
    <property type="entry name" value="CMP-KDO-Synthetase"/>
    <property type="match status" value="1"/>
</dbReference>
<dbReference type="FunFam" id="3.90.550.10:FF:000011">
    <property type="entry name" value="3-deoxy-manno-octulosonate cytidylyltransferase"/>
    <property type="match status" value="1"/>
</dbReference>
<dbReference type="Gene3D" id="3.90.550.10">
    <property type="entry name" value="Spore Coat Polysaccharide Biosynthesis Protein SpsA, Chain A"/>
    <property type="match status" value="1"/>
</dbReference>
<dbReference type="HAMAP" id="MF_00057">
    <property type="entry name" value="KdsB"/>
    <property type="match status" value="1"/>
</dbReference>
<dbReference type="InterPro" id="IPR003329">
    <property type="entry name" value="Cytidylyl_trans"/>
</dbReference>
<dbReference type="InterPro" id="IPR004528">
    <property type="entry name" value="KdsB"/>
</dbReference>
<dbReference type="InterPro" id="IPR029044">
    <property type="entry name" value="Nucleotide-diphossugar_trans"/>
</dbReference>
<dbReference type="NCBIfam" id="TIGR00466">
    <property type="entry name" value="kdsB"/>
    <property type="match status" value="1"/>
</dbReference>
<dbReference type="NCBIfam" id="NF003950">
    <property type="entry name" value="PRK05450.1-3"/>
    <property type="match status" value="1"/>
</dbReference>
<dbReference type="NCBIfam" id="NF003952">
    <property type="entry name" value="PRK05450.1-5"/>
    <property type="match status" value="1"/>
</dbReference>
<dbReference type="NCBIfam" id="NF009905">
    <property type="entry name" value="PRK13368.1"/>
    <property type="match status" value="1"/>
</dbReference>
<dbReference type="PANTHER" id="PTHR42866">
    <property type="entry name" value="3-DEOXY-MANNO-OCTULOSONATE CYTIDYLYLTRANSFERASE"/>
    <property type="match status" value="1"/>
</dbReference>
<dbReference type="PANTHER" id="PTHR42866:SF2">
    <property type="entry name" value="3-DEOXY-MANNO-OCTULOSONATE CYTIDYLYLTRANSFERASE, MITOCHONDRIAL"/>
    <property type="match status" value="1"/>
</dbReference>
<dbReference type="Pfam" id="PF02348">
    <property type="entry name" value="CTP_transf_3"/>
    <property type="match status" value="1"/>
</dbReference>
<dbReference type="SUPFAM" id="SSF53448">
    <property type="entry name" value="Nucleotide-diphospho-sugar transferases"/>
    <property type="match status" value="1"/>
</dbReference>
<evidence type="ECO:0000255" key="1">
    <source>
        <dbReference type="HAMAP-Rule" id="MF_00057"/>
    </source>
</evidence>
<gene>
    <name evidence="1" type="primary">kdsB</name>
    <name type="ordered locus">ECDH10B_0988</name>
</gene>
<name>KDSB_ECODH</name>
<proteinExistence type="inferred from homology"/>
<feature type="chain" id="PRO_1000091869" description="3-deoxy-manno-octulosonate cytidylyltransferase">
    <location>
        <begin position="1"/>
        <end position="248"/>
    </location>
</feature>
<comment type="function">
    <text evidence="1">Activates KDO (a required 8-carbon sugar) for incorporation into bacterial lipopolysaccharide in Gram-negative bacteria.</text>
</comment>
<comment type="catalytic activity">
    <reaction evidence="1">
        <text>3-deoxy-alpha-D-manno-oct-2-ulosonate + CTP = CMP-3-deoxy-beta-D-manno-octulosonate + diphosphate</text>
        <dbReference type="Rhea" id="RHEA:23448"/>
        <dbReference type="ChEBI" id="CHEBI:33019"/>
        <dbReference type="ChEBI" id="CHEBI:37563"/>
        <dbReference type="ChEBI" id="CHEBI:85986"/>
        <dbReference type="ChEBI" id="CHEBI:85987"/>
        <dbReference type="EC" id="2.7.7.38"/>
    </reaction>
</comment>
<comment type="pathway">
    <text evidence="1">Nucleotide-sugar biosynthesis; CMP-3-deoxy-D-manno-octulosonate biosynthesis; CMP-3-deoxy-D-manno-octulosonate from 3-deoxy-D-manno-octulosonate and CTP: step 1/1.</text>
</comment>
<comment type="pathway">
    <text evidence="1">Bacterial outer membrane biogenesis; lipopolysaccharide biosynthesis.</text>
</comment>
<comment type="subcellular location">
    <subcellularLocation>
        <location evidence="1">Cytoplasm</location>
    </subcellularLocation>
</comment>
<comment type="similarity">
    <text evidence="1">Belongs to the KdsB family.</text>
</comment>
<accession>B1X8M2</accession>